<gene>
    <name type="primary">eIF3-S6</name>
    <name type="synonym">Int6</name>
    <name type="ORF">GL16190</name>
</gene>
<comment type="function">
    <text evidence="2">Component of the eukaryotic translation initiation factor 3 (eIF-3) complex, which is involved in protein synthesis of a specialized repertoire of mRNAs and, together with other initiation factors, stimulates binding of mRNA and methionyl-tRNAi to the 40S ribosome. The eIF-3 complex specifically targets and initiates translation of a subset of mRNAs involved in cell proliferation.</text>
</comment>
<comment type="subunit">
    <text evidence="1 2">Component of the eukaryotic translation initiation factor 3 (eIF-3) complex. The eIF-3 complex interacts with pix. Interacts with mxt (By similarity).</text>
</comment>
<comment type="subcellular location">
    <subcellularLocation>
        <location evidence="2">Cytoplasm</location>
    </subcellularLocation>
</comment>
<comment type="similarity">
    <text evidence="2">Belongs to the eIF-3 subunit E family.</text>
</comment>
<proteinExistence type="inferred from homology"/>
<sequence>MANFDLTRINCQFLDRHLTFPLLEFLCGKEIYNQQELLEYILETVNKTNMIDYTMDTRKRLNLSQEMPDELVQRKAEVLATLKQLQNEVAPIMKATDILKNGESMKDSKTFVNALQKDYNFKVEHLESAYKLAKYLYECGNYQESTSYLYFCLIVMSPNDKNYLNVLWGKLAAEILTLNWNTALEDLTRLRDYIDSANFSTIQALQQRTWLIHWSVLVFFNHPKGRDLIIEMFLYKPLYLNAIQTMCPHIMRYLATAVVINRTRRNALKDLIKVIQQESYTYRDPITEFLECLYVNFDFEGARLKLHECQTVILNDFFIVACLNEFVEDARLMIFETFCRIHQCITISMLADKLNMKPNEAECWIVNLIRNARLNAKIDSKLGHVVMGTQPLSPYQQLVEKIDSLSMRSEHLAGLIERKSKQNNKESIDSWKYY</sequence>
<feature type="chain" id="PRO_0000365967" description="Eukaryotic translation initiation factor 3 subunit E">
    <location>
        <begin position="1"/>
        <end position="434"/>
    </location>
</feature>
<feature type="domain" description="PCI" evidence="3">
    <location>
        <begin position="219"/>
        <end position="392"/>
    </location>
</feature>
<evidence type="ECO:0000250" key="1">
    <source>
        <dbReference type="UniProtKB" id="O77410"/>
    </source>
</evidence>
<evidence type="ECO:0000255" key="2">
    <source>
        <dbReference type="HAMAP-Rule" id="MF_03004"/>
    </source>
</evidence>
<evidence type="ECO:0000255" key="3">
    <source>
        <dbReference type="PROSITE-ProRule" id="PRU01185"/>
    </source>
</evidence>
<keyword id="KW-0963">Cytoplasm</keyword>
<keyword id="KW-0396">Initiation factor</keyword>
<keyword id="KW-0648">Protein biosynthesis</keyword>
<keyword id="KW-1185">Reference proteome</keyword>
<reference key="1">
    <citation type="journal article" date="2007" name="Nature">
        <title>Evolution of genes and genomes on the Drosophila phylogeny.</title>
        <authorList>
            <consortium name="Drosophila 12 genomes consortium"/>
        </authorList>
    </citation>
    <scope>NUCLEOTIDE SEQUENCE [LARGE SCALE GENOMIC DNA]</scope>
    <source>
        <strain>MSH-3 / Tucson 14011-0111.49</strain>
    </source>
</reference>
<accession>B4H5N1</accession>
<name>EIF3E_DROPE</name>
<dbReference type="EMBL" id="CH479211">
    <property type="protein sequence ID" value="EDW33083.1"/>
    <property type="molecule type" value="Genomic_DNA"/>
</dbReference>
<dbReference type="SMR" id="B4H5N1"/>
<dbReference type="STRING" id="7234.B4H5N1"/>
<dbReference type="EnsemblMetazoa" id="FBtr0181805">
    <property type="protein sequence ID" value="FBpp0180297"/>
    <property type="gene ID" value="FBgn0153794"/>
</dbReference>
<dbReference type="EnsemblMetazoa" id="XM_002026124.2">
    <property type="protein sequence ID" value="XP_002026160.1"/>
    <property type="gene ID" value="LOC6601005"/>
</dbReference>
<dbReference type="GeneID" id="6601005"/>
<dbReference type="KEGG" id="dpe:6601005"/>
<dbReference type="CTD" id="3646"/>
<dbReference type="eggNOG" id="KOG2758">
    <property type="taxonomic scope" value="Eukaryota"/>
</dbReference>
<dbReference type="HOGENOM" id="CLU_031132_0_0_1"/>
<dbReference type="OMA" id="NCPWILR"/>
<dbReference type="OrthoDB" id="417252at2759"/>
<dbReference type="PhylomeDB" id="B4H5N1"/>
<dbReference type="Proteomes" id="UP000008744">
    <property type="component" value="Unassembled WGS sequence"/>
</dbReference>
<dbReference type="GO" id="GO:0016282">
    <property type="term" value="C:eukaryotic 43S preinitiation complex"/>
    <property type="evidence" value="ECO:0007669"/>
    <property type="project" value="UniProtKB-UniRule"/>
</dbReference>
<dbReference type="GO" id="GO:0033290">
    <property type="term" value="C:eukaryotic 48S preinitiation complex"/>
    <property type="evidence" value="ECO:0007669"/>
    <property type="project" value="UniProtKB-UniRule"/>
</dbReference>
<dbReference type="GO" id="GO:0071540">
    <property type="term" value="C:eukaryotic translation initiation factor 3 complex, eIF3e"/>
    <property type="evidence" value="ECO:0007669"/>
    <property type="project" value="UniProtKB-UniRule"/>
</dbReference>
<dbReference type="GO" id="GO:0043231">
    <property type="term" value="C:intracellular membrane-bounded organelle"/>
    <property type="evidence" value="ECO:0007669"/>
    <property type="project" value="EnsemblMetazoa"/>
</dbReference>
<dbReference type="GO" id="GO:0003743">
    <property type="term" value="F:translation initiation factor activity"/>
    <property type="evidence" value="ECO:0007669"/>
    <property type="project" value="UniProtKB-UniRule"/>
</dbReference>
<dbReference type="GO" id="GO:0001732">
    <property type="term" value="P:formation of cytoplasmic translation initiation complex"/>
    <property type="evidence" value="ECO:0007669"/>
    <property type="project" value="UniProtKB-UniRule"/>
</dbReference>
<dbReference type="CDD" id="cd21378">
    <property type="entry name" value="eIF3E"/>
    <property type="match status" value="1"/>
</dbReference>
<dbReference type="HAMAP" id="MF_03004">
    <property type="entry name" value="eIF3e"/>
    <property type="match status" value="1"/>
</dbReference>
<dbReference type="InterPro" id="IPR016650">
    <property type="entry name" value="eIF3e"/>
</dbReference>
<dbReference type="InterPro" id="IPR019010">
    <property type="entry name" value="eIF3e_N"/>
</dbReference>
<dbReference type="InterPro" id="IPR000717">
    <property type="entry name" value="PCI_dom"/>
</dbReference>
<dbReference type="InterPro" id="IPR036390">
    <property type="entry name" value="WH_DNA-bd_sf"/>
</dbReference>
<dbReference type="PANTHER" id="PTHR10317">
    <property type="entry name" value="EUKARYOTIC TRANSLATION INITIATION FACTOR 3 SUBUNIT E"/>
    <property type="match status" value="1"/>
</dbReference>
<dbReference type="Pfam" id="PF09440">
    <property type="entry name" value="eIF3_N"/>
    <property type="match status" value="1"/>
</dbReference>
<dbReference type="Pfam" id="PF01399">
    <property type="entry name" value="PCI"/>
    <property type="match status" value="1"/>
</dbReference>
<dbReference type="PIRSF" id="PIRSF016255">
    <property type="entry name" value="eIF3e_su6"/>
    <property type="match status" value="1"/>
</dbReference>
<dbReference type="SMART" id="SM01186">
    <property type="entry name" value="eIF3_N"/>
    <property type="match status" value="1"/>
</dbReference>
<dbReference type="SMART" id="SM00088">
    <property type="entry name" value="PINT"/>
    <property type="match status" value="1"/>
</dbReference>
<dbReference type="SUPFAM" id="SSF46785">
    <property type="entry name" value="Winged helix' DNA-binding domain"/>
    <property type="match status" value="1"/>
</dbReference>
<dbReference type="PROSITE" id="PS50250">
    <property type="entry name" value="PCI"/>
    <property type="match status" value="1"/>
</dbReference>
<organism>
    <name type="scientific">Drosophila persimilis</name>
    <name type="common">Fruit fly</name>
    <dbReference type="NCBI Taxonomy" id="7234"/>
    <lineage>
        <taxon>Eukaryota</taxon>
        <taxon>Metazoa</taxon>
        <taxon>Ecdysozoa</taxon>
        <taxon>Arthropoda</taxon>
        <taxon>Hexapoda</taxon>
        <taxon>Insecta</taxon>
        <taxon>Pterygota</taxon>
        <taxon>Neoptera</taxon>
        <taxon>Endopterygota</taxon>
        <taxon>Diptera</taxon>
        <taxon>Brachycera</taxon>
        <taxon>Muscomorpha</taxon>
        <taxon>Ephydroidea</taxon>
        <taxon>Drosophilidae</taxon>
        <taxon>Drosophila</taxon>
        <taxon>Sophophora</taxon>
    </lineage>
</organism>
<protein>
    <recommendedName>
        <fullName evidence="2">Eukaryotic translation initiation factor 3 subunit E</fullName>
        <shortName evidence="2">eIF3e</shortName>
    </recommendedName>
    <alternativeName>
        <fullName evidence="2">Eukaryotic translation initiation factor 3 subunit 6</fullName>
    </alternativeName>
</protein>